<evidence type="ECO:0000255" key="1">
    <source>
        <dbReference type="HAMAP-Rule" id="MF_00563"/>
    </source>
</evidence>
<evidence type="ECO:0000269" key="2">
    <source>
    </source>
</evidence>
<evidence type="ECO:0000269" key="3">
    <source>
    </source>
</evidence>
<evidence type="ECO:0007829" key="4">
    <source>
        <dbReference type="PDB" id="3CE6"/>
    </source>
</evidence>
<evidence type="ECO:0007829" key="5">
    <source>
        <dbReference type="PDB" id="3DHY"/>
    </source>
</evidence>
<feature type="chain" id="PRO_0000116971" description="Adenosylhomocysteinase">
    <location>
        <begin position="1"/>
        <end position="495"/>
    </location>
</feature>
<feature type="binding site" evidence="1">
    <location>
        <position position="71"/>
    </location>
    <ligand>
        <name>substrate</name>
    </ligand>
</feature>
<feature type="binding site" evidence="1">
    <location>
        <position position="156"/>
    </location>
    <ligand>
        <name>substrate</name>
    </ligand>
</feature>
<feature type="binding site" evidence="1">
    <location>
        <position position="218"/>
    </location>
    <ligand>
        <name>substrate</name>
    </ligand>
</feature>
<feature type="binding site" evidence="1">
    <location>
        <begin position="219"/>
        <end position="221"/>
    </location>
    <ligand>
        <name>NAD(+)</name>
        <dbReference type="ChEBI" id="CHEBI:57540"/>
    </ligand>
</feature>
<feature type="binding site" evidence="1">
    <location>
        <position position="248"/>
    </location>
    <ligand>
        <name>substrate</name>
    </ligand>
</feature>
<feature type="binding site" evidence="1">
    <location>
        <position position="252"/>
    </location>
    <ligand>
        <name>substrate</name>
    </ligand>
</feature>
<feature type="binding site" evidence="1">
    <location>
        <position position="253"/>
    </location>
    <ligand>
        <name>NAD(+)</name>
        <dbReference type="ChEBI" id="CHEBI:57540"/>
    </ligand>
</feature>
<feature type="binding site" evidence="1">
    <location>
        <begin position="282"/>
        <end position="287"/>
    </location>
    <ligand>
        <name>NAD(+)</name>
        <dbReference type="ChEBI" id="CHEBI:57540"/>
    </ligand>
</feature>
<feature type="binding site" evidence="1">
    <location>
        <position position="305"/>
    </location>
    <ligand>
        <name>NAD(+)</name>
        <dbReference type="ChEBI" id="CHEBI:57540"/>
    </ligand>
</feature>
<feature type="binding site" evidence="1">
    <location>
        <position position="340"/>
    </location>
    <ligand>
        <name>NAD(+)</name>
        <dbReference type="ChEBI" id="CHEBI:57540"/>
    </ligand>
</feature>
<feature type="binding site" evidence="1">
    <location>
        <begin position="361"/>
        <end position="363"/>
    </location>
    <ligand>
        <name>NAD(+)</name>
        <dbReference type="ChEBI" id="CHEBI:57540"/>
    </ligand>
</feature>
<feature type="binding site" evidence="1">
    <location>
        <position position="409"/>
    </location>
    <ligand>
        <name>NAD(+)</name>
        <dbReference type="ChEBI" id="CHEBI:57540"/>
    </ligand>
</feature>
<feature type="cross-link" description="Isoglutamyl lysine isopeptide (Lys-Gln) (interchain with Q-Cter in protein Pup)" evidence="3">
    <location>
        <position position="474"/>
    </location>
</feature>
<feature type="strand" evidence="4">
    <location>
        <begin position="14"/>
        <end position="16"/>
    </location>
</feature>
<feature type="strand" evidence="4">
    <location>
        <begin position="19"/>
        <end position="22"/>
    </location>
</feature>
<feature type="helix" evidence="4">
    <location>
        <begin position="26"/>
        <end position="28"/>
    </location>
</feature>
<feature type="helix" evidence="4">
    <location>
        <begin position="29"/>
        <end position="42"/>
    </location>
</feature>
<feature type="helix" evidence="4">
    <location>
        <begin position="44"/>
        <end position="53"/>
    </location>
</feature>
<feature type="turn" evidence="4">
    <location>
        <begin position="54"/>
        <end position="56"/>
    </location>
</feature>
<feature type="turn" evidence="4">
    <location>
        <begin position="58"/>
        <end position="61"/>
    </location>
</feature>
<feature type="strand" evidence="4">
    <location>
        <begin position="63"/>
        <end position="68"/>
    </location>
</feature>
<feature type="helix" evidence="4">
    <location>
        <begin position="72"/>
        <end position="83"/>
    </location>
</feature>
<feature type="strand" evidence="4">
    <location>
        <begin position="87"/>
        <end position="91"/>
    </location>
</feature>
<feature type="strand" evidence="5">
    <location>
        <begin position="93"/>
        <end position="96"/>
    </location>
</feature>
<feature type="helix" evidence="4">
    <location>
        <begin position="100"/>
        <end position="108"/>
    </location>
</feature>
<feature type="turn" evidence="5">
    <location>
        <begin position="109"/>
        <end position="111"/>
    </location>
</feature>
<feature type="strand" evidence="4">
    <location>
        <begin position="114"/>
        <end position="116"/>
    </location>
</feature>
<feature type="strand" evidence="5">
    <location>
        <begin position="122"/>
        <end position="124"/>
    </location>
</feature>
<feature type="helix" evidence="4">
    <location>
        <begin position="130"/>
        <end position="141"/>
    </location>
</feature>
<feature type="strand" evidence="4">
    <location>
        <begin position="152"/>
        <end position="158"/>
    </location>
</feature>
<feature type="helix" evidence="4">
    <location>
        <begin position="159"/>
        <end position="173"/>
    </location>
</feature>
<feature type="helix" evidence="4">
    <location>
        <begin position="185"/>
        <end position="200"/>
    </location>
</feature>
<feature type="helix" evidence="4">
    <location>
        <begin position="204"/>
        <end position="211"/>
    </location>
</feature>
<feature type="strand" evidence="4">
    <location>
        <begin position="215"/>
        <end position="217"/>
    </location>
</feature>
<feature type="helix" evidence="4">
    <location>
        <begin position="220"/>
        <end position="231"/>
    </location>
</feature>
<feature type="strand" evidence="4">
    <location>
        <begin position="239"/>
        <end position="241"/>
    </location>
</feature>
<feature type="helix" evidence="4">
    <location>
        <begin position="246"/>
        <end position="249"/>
    </location>
</feature>
<feature type="helix" evidence="4">
    <location>
        <begin position="252"/>
        <end position="269"/>
    </location>
</feature>
<feature type="strand" evidence="4">
    <location>
        <begin position="277"/>
        <end position="281"/>
    </location>
</feature>
<feature type="helix" evidence="4">
    <location>
        <begin position="285"/>
        <end position="296"/>
    </location>
</feature>
<feature type="strand" evidence="4">
    <location>
        <begin position="300"/>
        <end position="304"/>
    </location>
</feature>
<feature type="helix" evidence="4">
    <location>
        <begin position="308"/>
        <end position="316"/>
    </location>
</feature>
<feature type="helix" evidence="4">
    <location>
        <begin position="324"/>
        <end position="327"/>
    </location>
</feature>
<feature type="helix" evidence="4">
    <location>
        <begin position="328"/>
        <end position="330"/>
    </location>
</feature>
<feature type="strand" evidence="4">
    <location>
        <begin position="332"/>
        <end position="336"/>
    </location>
</feature>
<feature type="strand" evidence="4">
    <location>
        <begin position="338"/>
        <end position="341"/>
    </location>
</feature>
<feature type="helix" evidence="4">
    <location>
        <begin position="346"/>
        <end position="351"/>
    </location>
</feature>
<feature type="strand" evidence="4">
    <location>
        <begin position="357"/>
        <end position="360"/>
    </location>
</feature>
<feature type="strand" evidence="4">
    <location>
        <begin position="362"/>
        <end position="364"/>
    </location>
</feature>
<feature type="helix" evidence="4">
    <location>
        <begin position="365"/>
        <end position="367"/>
    </location>
</feature>
<feature type="helix" evidence="4">
    <location>
        <begin position="370"/>
        <end position="375"/>
    </location>
</feature>
<feature type="strand" evidence="4">
    <location>
        <begin position="379"/>
        <end position="384"/>
    </location>
</feature>
<feature type="strand" evidence="4">
    <location>
        <begin position="387"/>
        <end position="391"/>
    </location>
</feature>
<feature type="turn" evidence="4">
    <location>
        <begin position="393"/>
        <end position="395"/>
    </location>
</feature>
<feature type="strand" evidence="4">
    <location>
        <begin position="398"/>
        <end position="402"/>
    </location>
</feature>
<feature type="helix" evidence="4">
    <location>
        <begin position="403"/>
        <end position="405"/>
    </location>
</feature>
<feature type="helix" evidence="4">
    <location>
        <begin position="408"/>
        <end position="412"/>
    </location>
</feature>
<feature type="helix" evidence="4">
    <location>
        <begin position="418"/>
        <end position="437"/>
    </location>
</feature>
<feature type="helix" evidence="4">
    <location>
        <begin position="439"/>
        <end position="441"/>
    </location>
</feature>
<feature type="strand" evidence="4">
    <location>
        <begin position="444"/>
        <end position="447"/>
    </location>
</feature>
<feature type="helix" evidence="4">
    <location>
        <begin position="451"/>
        <end position="465"/>
    </location>
</feature>
<feature type="helix" evidence="4">
    <location>
        <begin position="474"/>
        <end position="480"/>
    </location>
</feature>
<gene>
    <name evidence="1" type="primary">ahcY</name>
    <name type="synonym">sahH</name>
    <name type="ordered locus">Rv3248c</name>
    <name type="ORF">MTCY20B11.23c</name>
</gene>
<sequence>MTGNLVTKNSLTPDVRNGIDFKIADLSLADFGRKELRIAEHEMPGLMSLRREYAEVQPLKGARISGSLHMTVQTAVLIETLTALGAEVRWASCNIFSTQDHAAAAVVVGPHGTPDEPKGVPVFAWKGETLEEYWWAAEQMLTWPDPDKPANMILDDGGDATMLVLRGMQYEKAGVVPPAEEDDPAEWKVFLNLLRTRFETDKDKWTKIAESVKGVTEETTTGVLRLYQFAAAGDLAFPAINVNDSVTKSKFDNKYGTRHSLIDGINRGTDALIGGKKVLICGYGDVGKGCAEAMKGQGARVSVTEIDPINALQAMMEGFDVVTVEEAIGDADIVVTATGNKDIIMLEHIKAMKDHAILGNIGHFDNEIDMAGLERSGATRVNVKPQVDLWTFGDTGRSIIVLSEGRLLNLGNATGHPSFVMSNSFANQTIAQIELWTKNDEYDNEVYRLPKHLDEKVARIHVEALGGHLTKLTKEQAEYLGVDVEGPYKPDHYRY</sequence>
<comment type="function">
    <text evidence="1">May play a key role in the regulation of the intracellular concentration of adenosylhomocysteine.</text>
</comment>
<comment type="catalytic activity">
    <reaction evidence="1">
        <text>S-adenosyl-L-homocysteine + H2O = L-homocysteine + adenosine</text>
        <dbReference type="Rhea" id="RHEA:21708"/>
        <dbReference type="ChEBI" id="CHEBI:15377"/>
        <dbReference type="ChEBI" id="CHEBI:16335"/>
        <dbReference type="ChEBI" id="CHEBI:57856"/>
        <dbReference type="ChEBI" id="CHEBI:58199"/>
        <dbReference type="EC" id="3.13.2.1"/>
    </reaction>
</comment>
<comment type="cofactor">
    <cofactor evidence="1 2">
        <name>NAD(+)</name>
        <dbReference type="ChEBI" id="CHEBI:57540"/>
    </cofactor>
    <text evidence="1 2">Binds 1 NAD(+) per subunit.</text>
</comment>
<comment type="pathway">
    <text evidence="1">Amino-acid biosynthesis; L-homocysteine biosynthesis; L-homocysteine from S-adenosyl-L-homocysteine: step 1/1.</text>
</comment>
<comment type="subunit">
    <text evidence="2">Homotetramer.</text>
</comment>
<comment type="interaction">
    <interactant intactId="EBI-11740468">
        <id>P9WGV3</id>
    </interactant>
    <interactant intactId="EBI-3917999">
        <id>P10145</id>
        <label>CXCL8</label>
    </interactant>
    <organismsDiffer>true</organismsDiffer>
    <experiments>3</experiments>
</comment>
<comment type="subcellular location">
    <subcellularLocation>
        <location evidence="1">Cytoplasm</location>
    </subcellularLocation>
</comment>
<comment type="similarity">
    <text evidence="1">Belongs to the adenosylhomocysteinase family.</text>
</comment>
<protein>
    <recommendedName>
        <fullName evidence="1">Adenosylhomocysteinase</fullName>
        <ecNumber evidence="1">3.13.2.1</ecNumber>
    </recommendedName>
    <alternativeName>
        <fullName evidence="1">S-adenosyl-L-homocysteine hydrolase</fullName>
        <shortName evidence="1">AdoHcyase</shortName>
    </alternativeName>
</protein>
<name>SAHH_MYCTU</name>
<keyword id="KW-0002">3D-structure</keyword>
<keyword id="KW-0963">Cytoplasm</keyword>
<keyword id="KW-0378">Hydrolase</keyword>
<keyword id="KW-1017">Isopeptide bond</keyword>
<keyword id="KW-0520">NAD</keyword>
<keyword id="KW-0554">One-carbon metabolism</keyword>
<keyword id="KW-1185">Reference proteome</keyword>
<keyword id="KW-0832">Ubl conjugation</keyword>
<accession>P9WGV3</accession>
<accession>L0TBZ4</accession>
<accession>O08364</accession>
<accession>P60176</accession>
<accession>P81858</accession>
<organism>
    <name type="scientific">Mycobacterium tuberculosis (strain ATCC 25618 / H37Rv)</name>
    <dbReference type="NCBI Taxonomy" id="83332"/>
    <lineage>
        <taxon>Bacteria</taxon>
        <taxon>Bacillati</taxon>
        <taxon>Actinomycetota</taxon>
        <taxon>Actinomycetes</taxon>
        <taxon>Mycobacteriales</taxon>
        <taxon>Mycobacteriaceae</taxon>
        <taxon>Mycobacterium</taxon>
        <taxon>Mycobacterium tuberculosis complex</taxon>
    </lineage>
</organism>
<reference key="1">
    <citation type="journal article" date="1998" name="Nature">
        <title>Deciphering the biology of Mycobacterium tuberculosis from the complete genome sequence.</title>
        <authorList>
            <person name="Cole S.T."/>
            <person name="Brosch R."/>
            <person name="Parkhill J."/>
            <person name="Garnier T."/>
            <person name="Churcher C.M."/>
            <person name="Harris D.E."/>
            <person name="Gordon S.V."/>
            <person name="Eiglmeier K."/>
            <person name="Gas S."/>
            <person name="Barry C.E. III"/>
            <person name="Tekaia F."/>
            <person name="Badcock K."/>
            <person name="Basham D."/>
            <person name="Brown D."/>
            <person name="Chillingworth T."/>
            <person name="Connor R."/>
            <person name="Davies R.M."/>
            <person name="Devlin K."/>
            <person name="Feltwell T."/>
            <person name="Gentles S."/>
            <person name="Hamlin N."/>
            <person name="Holroyd S."/>
            <person name="Hornsby T."/>
            <person name="Jagels K."/>
            <person name="Krogh A."/>
            <person name="McLean J."/>
            <person name="Moule S."/>
            <person name="Murphy L.D."/>
            <person name="Oliver S."/>
            <person name="Osborne J."/>
            <person name="Quail M.A."/>
            <person name="Rajandream M.A."/>
            <person name="Rogers J."/>
            <person name="Rutter S."/>
            <person name="Seeger K."/>
            <person name="Skelton S."/>
            <person name="Squares S."/>
            <person name="Squares R."/>
            <person name="Sulston J.E."/>
            <person name="Taylor K."/>
            <person name="Whitehead S."/>
            <person name="Barrell B.G."/>
        </authorList>
    </citation>
    <scope>NUCLEOTIDE SEQUENCE [LARGE SCALE GENOMIC DNA]</scope>
    <source>
        <strain>ATCC 25618 / H37Rv</strain>
    </source>
</reference>
<reference key="2">
    <citation type="journal article" date="2010" name="PLoS ONE">
        <title>Prokaryotic ubiquitin-like protein (Pup) proteome of Mycobacterium tuberculosis.</title>
        <authorList>
            <person name="Festa R.A."/>
            <person name="McAllister F."/>
            <person name="Pearce M.J."/>
            <person name="Mintseris J."/>
            <person name="Burns K.E."/>
            <person name="Gygi S.P."/>
            <person name="Darwin K.H."/>
        </authorList>
    </citation>
    <scope>PUPYLATION AT LYS-474</scope>
    <scope>IDENTIFICATION BY MASS SPECTROMETRY</scope>
    <source>
        <strain>ATCC 25618 / H37Rv</strain>
    </source>
</reference>
<reference key="3">
    <citation type="journal article" date="2011" name="Mol. Cell. Proteomics">
        <title>Proteogenomic analysis of Mycobacterium tuberculosis by high resolution mass spectrometry.</title>
        <authorList>
            <person name="Kelkar D.S."/>
            <person name="Kumar D."/>
            <person name="Kumar P."/>
            <person name="Balakrishnan L."/>
            <person name="Muthusamy B."/>
            <person name="Yadav A.K."/>
            <person name="Shrivastava P."/>
            <person name="Marimuthu A."/>
            <person name="Anand S."/>
            <person name="Sundaram H."/>
            <person name="Kingsbury R."/>
            <person name="Harsha H.C."/>
            <person name="Nair B."/>
            <person name="Prasad T.S."/>
            <person name="Chauhan D.S."/>
            <person name="Katoch K."/>
            <person name="Katoch V.M."/>
            <person name="Kumar P."/>
            <person name="Chaerkady R."/>
            <person name="Ramachandran S."/>
            <person name="Dash D."/>
            <person name="Pandey A."/>
        </authorList>
    </citation>
    <scope>IDENTIFICATION BY MASS SPECTROMETRY [LARGE SCALE ANALYSIS]</scope>
    <source>
        <strain>ATCC 25618 / H37Rv</strain>
    </source>
</reference>
<reference key="4">
    <citation type="journal article" date="2008" name="Protein Sci.">
        <title>Crystal structures of Mycobacterium tuberculosis S-adenosyl-L-homocysteine hydrolase in ternary complex with substrate and inhibitors.</title>
        <authorList>
            <person name="Reddy M.C."/>
            <person name="Kuppan G."/>
            <person name="Shetty N.D."/>
            <person name="Owen J.L."/>
            <person name="Ioerger T.R."/>
            <person name="Sacchettini J.C."/>
        </authorList>
    </citation>
    <scope>X-RAY CRYSTALLOGRAPHY (1.6 ANGSTROMS) IN COMPLEX WITH NAD; ADENOSINE AND INHIBITORS</scope>
    <scope>COFACTOR</scope>
    <scope>SUBUNIT</scope>
</reference>
<proteinExistence type="evidence at protein level"/>
<dbReference type="EC" id="3.13.2.1" evidence="1"/>
<dbReference type="EMBL" id="AL123456">
    <property type="protein sequence ID" value="CCP46067.1"/>
    <property type="molecule type" value="Genomic_DNA"/>
</dbReference>
<dbReference type="PIR" id="B70593">
    <property type="entry name" value="B70593"/>
</dbReference>
<dbReference type="RefSeq" id="NP_217765.1">
    <property type="nucleotide sequence ID" value="NC_000962.3"/>
</dbReference>
<dbReference type="RefSeq" id="WP_003417039.1">
    <property type="nucleotide sequence ID" value="NZ_NVQJ01000003.1"/>
</dbReference>
<dbReference type="PDB" id="2ZIZ">
    <property type="method" value="X-ray"/>
    <property type="resolution" value="2.20 A"/>
    <property type="chains" value="A/B/C/D=1-495"/>
</dbReference>
<dbReference type="PDB" id="2ZJ0">
    <property type="method" value="X-ray"/>
    <property type="resolution" value="2.42 A"/>
    <property type="chains" value="A/B/C/D=1-495"/>
</dbReference>
<dbReference type="PDB" id="2ZJ1">
    <property type="method" value="X-ray"/>
    <property type="resolution" value="2.01 A"/>
    <property type="chains" value="A/B/C/D=1-495"/>
</dbReference>
<dbReference type="PDB" id="3CE6">
    <property type="method" value="X-ray"/>
    <property type="resolution" value="1.60 A"/>
    <property type="chains" value="A/B/C/D=2-495"/>
</dbReference>
<dbReference type="PDB" id="3DHY">
    <property type="method" value="X-ray"/>
    <property type="resolution" value="2.00 A"/>
    <property type="chains" value="A/B/C/D=1-495"/>
</dbReference>
<dbReference type="PDBsum" id="2ZIZ"/>
<dbReference type="PDBsum" id="2ZJ0"/>
<dbReference type="PDBsum" id="2ZJ1"/>
<dbReference type="PDBsum" id="3CE6"/>
<dbReference type="PDBsum" id="3DHY"/>
<dbReference type="SMR" id="P9WGV3"/>
<dbReference type="FunCoup" id="P9WGV3">
    <property type="interactions" value="440"/>
</dbReference>
<dbReference type="IntAct" id="P9WGV3">
    <property type="interactions" value="1"/>
</dbReference>
<dbReference type="STRING" id="83332.Rv3248c"/>
<dbReference type="DrugBank" id="DB07052">
    <property type="generic name" value="5'-S-ethyl-5'-thioadenosine"/>
</dbReference>
<dbReference type="PaxDb" id="83332-Rv3248c"/>
<dbReference type="DNASU" id="888746"/>
<dbReference type="GeneID" id="45427242"/>
<dbReference type="GeneID" id="888746"/>
<dbReference type="KEGG" id="mtu:Rv3248c"/>
<dbReference type="KEGG" id="mtv:RVBD_3248c"/>
<dbReference type="TubercuList" id="Rv3248c"/>
<dbReference type="eggNOG" id="COG0499">
    <property type="taxonomic scope" value="Bacteria"/>
</dbReference>
<dbReference type="InParanoid" id="P9WGV3"/>
<dbReference type="OrthoDB" id="9802717at2"/>
<dbReference type="PhylomeDB" id="P9WGV3"/>
<dbReference type="BRENDA" id="3.3.1.1">
    <property type="organism ID" value="3445"/>
</dbReference>
<dbReference type="UniPathway" id="UPA00314">
    <property type="reaction ID" value="UER00076"/>
</dbReference>
<dbReference type="EvolutionaryTrace" id="P9WGV3"/>
<dbReference type="Proteomes" id="UP000001584">
    <property type="component" value="Chromosome"/>
</dbReference>
<dbReference type="GO" id="GO:0005829">
    <property type="term" value="C:cytosol"/>
    <property type="evidence" value="ECO:0007005"/>
    <property type="project" value="MTBBASE"/>
</dbReference>
<dbReference type="GO" id="GO:0005576">
    <property type="term" value="C:extracellular region"/>
    <property type="evidence" value="ECO:0000314"/>
    <property type="project" value="CAFA"/>
</dbReference>
<dbReference type="GO" id="GO:0009274">
    <property type="term" value="C:peptidoglycan-based cell wall"/>
    <property type="evidence" value="ECO:0007005"/>
    <property type="project" value="MTBBASE"/>
</dbReference>
<dbReference type="GO" id="GO:0005886">
    <property type="term" value="C:plasma membrane"/>
    <property type="evidence" value="ECO:0007005"/>
    <property type="project" value="MTBBASE"/>
</dbReference>
<dbReference type="GO" id="GO:0004013">
    <property type="term" value="F:adenosylhomocysteinase activity"/>
    <property type="evidence" value="ECO:0000314"/>
    <property type="project" value="MTBBASE"/>
</dbReference>
<dbReference type="GO" id="GO:0070403">
    <property type="term" value="F:NAD+ binding"/>
    <property type="evidence" value="ECO:0000314"/>
    <property type="project" value="MTBBASE"/>
</dbReference>
<dbReference type="GO" id="GO:0035375">
    <property type="term" value="F:zymogen binding"/>
    <property type="evidence" value="ECO:0000353"/>
    <property type="project" value="CAFA"/>
</dbReference>
<dbReference type="GO" id="GO:0046085">
    <property type="term" value="P:adenosine metabolic process"/>
    <property type="evidence" value="ECO:0000314"/>
    <property type="project" value="MTBBASE"/>
</dbReference>
<dbReference type="GO" id="GO:0044650">
    <property type="term" value="P:adhesion of symbiont to host cell"/>
    <property type="evidence" value="ECO:0000315"/>
    <property type="project" value="AgBase"/>
</dbReference>
<dbReference type="GO" id="GO:0035635">
    <property type="term" value="P:entry of bacterium into host cell"/>
    <property type="evidence" value="ECO:0000315"/>
    <property type="project" value="AgBase"/>
</dbReference>
<dbReference type="GO" id="GO:0071269">
    <property type="term" value="P:L-homocysteine biosynthetic process"/>
    <property type="evidence" value="ECO:0007669"/>
    <property type="project" value="UniProtKB-UniRule"/>
</dbReference>
<dbReference type="GO" id="GO:0009087">
    <property type="term" value="P:methionine catabolic process"/>
    <property type="evidence" value="ECO:0000314"/>
    <property type="project" value="MTBBASE"/>
</dbReference>
<dbReference type="GO" id="GO:0006730">
    <property type="term" value="P:one-carbon metabolic process"/>
    <property type="evidence" value="ECO:0007669"/>
    <property type="project" value="UniProtKB-KW"/>
</dbReference>
<dbReference type="GO" id="GO:0033353">
    <property type="term" value="P:S-adenosylmethionine cycle"/>
    <property type="evidence" value="ECO:0000318"/>
    <property type="project" value="GO_Central"/>
</dbReference>
<dbReference type="CDD" id="cd00401">
    <property type="entry name" value="SAHH"/>
    <property type="match status" value="1"/>
</dbReference>
<dbReference type="FunFam" id="3.40.50.720:FF:000004">
    <property type="entry name" value="Adenosylhomocysteinase"/>
    <property type="match status" value="1"/>
</dbReference>
<dbReference type="Gene3D" id="3.40.50.1480">
    <property type="entry name" value="Adenosylhomocysteinase-like"/>
    <property type="match status" value="1"/>
</dbReference>
<dbReference type="Gene3D" id="3.40.50.720">
    <property type="entry name" value="NAD(P)-binding Rossmann-like Domain"/>
    <property type="match status" value="1"/>
</dbReference>
<dbReference type="HAMAP" id="MF_00563">
    <property type="entry name" value="AdoHcyase"/>
    <property type="match status" value="1"/>
</dbReference>
<dbReference type="InterPro" id="IPR042172">
    <property type="entry name" value="Adenosylhomocyst_ase-like_sf"/>
</dbReference>
<dbReference type="InterPro" id="IPR000043">
    <property type="entry name" value="Adenosylhomocysteinase-like"/>
</dbReference>
<dbReference type="InterPro" id="IPR015878">
    <property type="entry name" value="Ado_hCys_hydrolase_NAD-bd"/>
</dbReference>
<dbReference type="InterPro" id="IPR036291">
    <property type="entry name" value="NAD(P)-bd_dom_sf"/>
</dbReference>
<dbReference type="InterPro" id="IPR020082">
    <property type="entry name" value="S-Ado-L-homoCys_hydrolase_CS"/>
</dbReference>
<dbReference type="NCBIfam" id="TIGR00936">
    <property type="entry name" value="ahcY"/>
    <property type="match status" value="1"/>
</dbReference>
<dbReference type="NCBIfam" id="NF004005">
    <property type="entry name" value="PRK05476.2-3"/>
    <property type="match status" value="1"/>
</dbReference>
<dbReference type="PANTHER" id="PTHR23420">
    <property type="entry name" value="ADENOSYLHOMOCYSTEINASE"/>
    <property type="match status" value="1"/>
</dbReference>
<dbReference type="PANTHER" id="PTHR23420:SF0">
    <property type="entry name" value="ADENOSYLHOMOCYSTEINASE"/>
    <property type="match status" value="1"/>
</dbReference>
<dbReference type="Pfam" id="PF05221">
    <property type="entry name" value="AdoHcyase"/>
    <property type="match status" value="1"/>
</dbReference>
<dbReference type="Pfam" id="PF00670">
    <property type="entry name" value="AdoHcyase_NAD"/>
    <property type="match status" value="1"/>
</dbReference>
<dbReference type="PIRSF" id="PIRSF001109">
    <property type="entry name" value="Ad_hcy_hydrolase"/>
    <property type="match status" value="1"/>
</dbReference>
<dbReference type="SMART" id="SM00996">
    <property type="entry name" value="AdoHcyase"/>
    <property type="match status" value="1"/>
</dbReference>
<dbReference type="SMART" id="SM00997">
    <property type="entry name" value="AdoHcyase_NAD"/>
    <property type="match status" value="1"/>
</dbReference>
<dbReference type="SUPFAM" id="SSF52283">
    <property type="entry name" value="Formate/glycerate dehydrogenase catalytic domain-like"/>
    <property type="match status" value="1"/>
</dbReference>
<dbReference type="SUPFAM" id="SSF51735">
    <property type="entry name" value="NAD(P)-binding Rossmann-fold domains"/>
    <property type="match status" value="1"/>
</dbReference>
<dbReference type="PROSITE" id="PS00738">
    <property type="entry name" value="ADOHCYASE_1"/>
    <property type="match status" value="1"/>
</dbReference>
<dbReference type="PROSITE" id="PS00739">
    <property type="entry name" value="ADOHCYASE_2"/>
    <property type="match status" value="1"/>
</dbReference>